<proteinExistence type="inferred from homology"/>
<keyword id="KW-0067">ATP-binding</keyword>
<keyword id="KW-1003">Cell membrane</keyword>
<keyword id="KW-0963">Cytoplasm</keyword>
<keyword id="KW-0472">Membrane</keyword>
<keyword id="KW-0547">Nucleotide-binding</keyword>
<keyword id="KW-0653">Protein transport</keyword>
<keyword id="KW-1278">Translocase</keyword>
<keyword id="KW-0811">Translocation</keyword>
<keyword id="KW-0813">Transport</keyword>
<protein>
    <recommendedName>
        <fullName evidence="1">Protein translocase subunit SecA</fullName>
        <ecNumber evidence="1">7.4.2.8</ecNumber>
    </recommendedName>
</protein>
<dbReference type="EC" id="7.4.2.8" evidence="1"/>
<dbReference type="EMBL" id="AE017283">
    <property type="protein sequence ID" value="AAT83082.1"/>
    <property type="molecule type" value="Genomic_DNA"/>
</dbReference>
<dbReference type="SMR" id="Q6A833"/>
<dbReference type="EnsemblBacteria" id="AAT83082">
    <property type="protein sequence ID" value="AAT83082"/>
    <property type="gene ID" value="PPA1333"/>
</dbReference>
<dbReference type="KEGG" id="pac:PPA1333"/>
<dbReference type="eggNOG" id="COG0653">
    <property type="taxonomic scope" value="Bacteria"/>
</dbReference>
<dbReference type="HOGENOM" id="CLU_005314_3_0_11"/>
<dbReference type="Proteomes" id="UP000000603">
    <property type="component" value="Chromosome"/>
</dbReference>
<dbReference type="GO" id="GO:0031522">
    <property type="term" value="C:cell envelope Sec protein transport complex"/>
    <property type="evidence" value="ECO:0007669"/>
    <property type="project" value="TreeGrafter"/>
</dbReference>
<dbReference type="GO" id="GO:0005829">
    <property type="term" value="C:cytosol"/>
    <property type="evidence" value="ECO:0007669"/>
    <property type="project" value="TreeGrafter"/>
</dbReference>
<dbReference type="GO" id="GO:0005886">
    <property type="term" value="C:plasma membrane"/>
    <property type="evidence" value="ECO:0007669"/>
    <property type="project" value="UniProtKB-SubCell"/>
</dbReference>
<dbReference type="GO" id="GO:0005524">
    <property type="term" value="F:ATP binding"/>
    <property type="evidence" value="ECO:0007669"/>
    <property type="project" value="UniProtKB-UniRule"/>
</dbReference>
<dbReference type="GO" id="GO:0008564">
    <property type="term" value="F:protein-exporting ATPase activity"/>
    <property type="evidence" value="ECO:0007669"/>
    <property type="project" value="UniProtKB-EC"/>
</dbReference>
<dbReference type="GO" id="GO:0065002">
    <property type="term" value="P:intracellular protein transmembrane transport"/>
    <property type="evidence" value="ECO:0007669"/>
    <property type="project" value="UniProtKB-UniRule"/>
</dbReference>
<dbReference type="GO" id="GO:0017038">
    <property type="term" value="P:protein import"/>
    <property type="evidence" value="ECO:0007669"/>
    <property type="project" value="InterPro"/>
</dbReference>
<dbReference type="GO" id="GO:0006605">
    <property type="term" value="P:protein targeting"/>
    <property type="evidence" value="ECO:0007669"/>
    <property type="project" value="UniProtKB-UniRule"/>
</dbReference>
<dbReference type="GO" id="GO:0043952">
    <property type="term" value="P:protein transport by the Sec complex"/>
    <property type="evidence" value="ECO:0007669"/>
    <property type="project" value="TreeGrafter"/>
</dbReference>
<dbReference type="CDD" id="cd17928">
    <property type="entry name" value="DEXDc_SecA"/>
    <property type="match status" value="1"/>
</dbReference>
<dbReference type="CDD" id="cd18803">
    <property type="entry name" value="SF2_C_secA"/>
    <property type="match status" value="1"/>
</dbReference>
<dbReference type="FunFam" id="1.10.3060.10:FF:000002">
    <property type="entry name" value="Preprotein translocase subunit SecA"/>
    <property type="match status" value="1"/>
</dbReference>
<dbReference type="FunFam" id="3.40.50.300:FF:000113">
    <property type="entry name" value="Preprotein translocase subunit SecA"/>
    <property type="match status" value="1"/>
</dbReference>
<dbReference type="FunFam" id="3.40.50.300:FF:000334">
    <property type="entry name" value="Protein translocase subunit SecA"/>
    <property type="match status" value="1"/>
</dbReference>
<dbReference type="FunFam" id="3.90.1440.10:FF:000002">
    <property type="entry name" value="Protein translocase subunit SecA"/>
    <property type="match status" value="1"/>
</dbReference>
<dbReference type="Gene3D" id="1.10.3060.10">
    <property type="entry name" value="Helical scaffold and wing domains of SecA"/>
    <property type="match status" value="1"/>
</dbReference>
<dbReference type="Gene3D" id="3.40.50.300">
    <property type="entry name" value="P-loop containing nucleotide triphosphate hydrolases"/>
    <property type="match status" value="2"/>
</dbReference>
<dbReference type="Gene3D" id="3.90.1440.10">
    <property type="entry name" value="SecA, preprotein cross-linking domain"/>
    <property type="match status" value="1"/>
</dbReference>
<dbReference type="HAMAP" id="MF_01382">
    <property type="entry name" value="SecA"/>
    <property type="match status" value="1"/>
</dbReference>
<dbReference type="InterPro" id="IPR014001">
    <property type="entry name" value="Helicase_ATP-bd"/>
</dbReference>
<dbReference type="InterPro" id="IPR001650">
    <property type="entry name" value="Helicase_C-like"/>
</dbReference>
<dbReference type="InterPro" id="IPR027417">
    <property type="entry name" value="P-loop_NTPase"/>
</dbReference>
<dbReference type="InterPro" id="IPR000185">
    <property type="entry name" value="SecA"/>
</dbReference>
<dbReference type="InterPro" id="IPR020937">
    <property type="entry name" value="SecA_CS"/>
</dbReference>
<dbReference type="InterPro" id="IPR011115">
    <property type="entry name" value="SecA_DEAD"/>
</dbReference>
<dbReference type="InterPro" id="IPR014018">
    <property type="entry name" value="SecA_motor_DEAD"/>
</dbReference>
<dbReference type="InterPro" id="IPR011130">
    <property type="entry name" value="SecA_preprotein_X-link_dom"/>
</dbReference>
<dbReference type="InterPro" id="IPR044722">
    <property type="entry name" value="SecA_SF2_C"/>
</dbReference>
<dbReference type="InterPro" id="IPR011116">
    <property type="entry name" value="SecA_Wing/Scaffold"/>
</dbReference>
<dbReference type="InterPro" id="IPR036266">
    <property type="entry name" value="SecA_Wing/Scaffold_sf"/>
</dbReference>
<dbReference type="InterPro" id="IPR036670">
    <property type="entry name" value="SecA_X-link_sf"/>
</dbReference>
<dbReference type="NCBIfam" id="NF009538">
    <property type="entry name" value="PRK12904.1"/>
    <property type="match status" value="1"/>
</dbReference>
<dbReference type="NCBIfam" id="TIGR00963">
    <property type="entry name" value="secA"/>
    <property type="match status" value="1"/>
</dbReference>
<dbReference type="PANTHER" id="PTHR30612:SF0">
    <property type="entry name" value="CHLOROPLAST PROTEIN-TRANSPORTING ATPASE"/>
    <property type="match status" value="1"/>
</dbReference>
<dbReference type="PANTHER" id="PTHR30612">
    <property type="entry name" value="SECA INNER MEMBRANE COMPONENT OF SEC PROTEIN SECRETION SYSTEM"/>
    <property type="match status" value="1"/>
</dbReference>
<dbReference type="Pfam" id="PF21090">
    <property type="entry name" value="P-loop_SecA"/>
    <property type="match status" value="1"/>
</dbReference>
<dbReference type="Pfam" id="PF07517">
    <property type="entry name" value="SecA_DEAD"/>
    <property type="match status" value="1"/>
</dbReference>
<dbReference type="Pfam" id="PF01043">
    <property type="entry name" value="SecA_PP_bind"/>
    <property type="match status" value="1"/>
</dbReference>
<dbReference type="Pfam" id="PF07516">
    <property type="entry name" value="SecA_SW"/>
    <property type="match status" value="1"/>
</dbReference>
<dbReference type="PRINTS" id="PR00906">
    <property type="entry name" value="SECA"/>
</dbReference>
<dbReference type="SMART" id="SM00957">
    <property type="entry name" value="SecA_DEAD"/>
    <property type="match status" value="1"/>
</dbReference>
<dbReference type="SMART" id="SM00958">
    <property type="entry name" value="SecA_PP_bind"/>
    <property type="match status" value="1"/>
</dbReference>
<dbReference type="SUPFAM" id="SSF81886">
    <property type="entry name" value="Helical scaffold and wing domains of SecA"/>
    <property type="match status" value="1"/>
</dbReference>
<dbReference type="SUPFAM" id="SSF52540">
    <property type="entry name" value="P-loop containing nucleoside triphosphate hydrolases"/>
    <property type="match status" value="2"/>
</dbReference>
<dbReference type="SUPFAM" id="SSF81767">
    <property type="entry name" value="Pre-protein crosslinking domain of SecA"/>
    <property type="match status" value="1"/>
</dbReference>
<dbReference type="PROSITE" id="PS01312">
    <property type="entry name" value="SECA"/>
    <property type="match status" value="1"/>
</dbReference>
<dbReference type="PROSITE" id="PS51196">
    <property type="entry name" value="SECA_MOTOR_DEAD"/>
    <property type="match status" value="1"/>
</dbReference>
<name>SECA_CUTAK</name>
<organism>
    <name type="scientific">Cutibacterium acnes (strain DSM 16379 / KPA171202)</name>
    <name type="common">Propionibacterium acnes</name>
    <dbReference type="NCBI Taxonomy" id="267747"/>
    <lineage>
        <taxon>Bacteria</taxon>
        <taxon>Bacillati</taxon>
        <taxon>Actinomycetota</taxon>
        <taxon>Actinomycetes</taxon>
        <taxon>Propionibacteriales</taxon>
        <taxon>Propionibacteriaceae</taxon>
        <taxon>Cutibacterium</taxon>
    </lineage>
</organism>
<evidence type="ECO:0000255" key="1">
    <source>
        <dbReference type="HAMAP-Rule" id="MF_01382"/>
    </source>
</evidence>
<evidence type="ECO:0000256" key="2">
    <source>
        <dbReference type="SAM" id="MobiDB-lite"/>
    </source>
</evidence>
<accession>Q6A833</accession>
<feature type="chain" id="PRO_0000318414" description="Protein translocase subunit SecA">
    <location>
        <begin position="1"/>
        <end position="901"/>
    </location>
</feature>
<feature type="region of interest" description="Disordered" evidence="2">
    <location>
        <begin position="828"/>
        <end position="901"/>
    </location>
</feature>
<feature type="compositionally biased region" description="Basic and acidic residues" evidence="2">
    <location>
        <begin position="871"/>
        <end position="881"/>
    </location>
</feature>
<feature type="compositionally biased region" description="Basic residues" evidence="2">
    <location>
        <begin position="882"/>
        <end position="901"/>
    </location>
</feature>
<feature type="binding site" evidence="1">
    <location>
        <position position="85"/>
    </location>
    <ligand>
        <name>ATP</name>
        <dbReference type="ChEBI" id="CHEBI:30616"/>
    </ligand>
</feature>
<feature type="binding site" evidence="1">
    <location>
        <begin position="103"/>
        <end position="107"/>
    </location>
    <ligand>
        <name>ATP</name>
        <dbReference type="ChEBI" id="CHEBI:30616"/>
    </ligand>
</feature>
<feature type="binding site" evidence="1">
    <location>
        <position position="492"/>
    </location>
    <ligand>
        <name>ATP</name>
        <dbReference type="ChEBI" id="CHEBI:30616"/>
    </ligand>
</feature>
<comment type="function">
    <text evidence="1">Part of the Sec protein translocase complex. Interacts with the SecYEG preprotein conducting channel. Has a central role in coupling the hydrolysis of ATP to the transfer of proteins into and across the cell membrane, serving as an ATP-driven molecular motor driving the stepwise translocation of polypeptide chains across the membrane.</text>
</comment>
<comment type="catalytic activity">
    <reaction evidence="1">
        <text>ATP + H2O + cellular proteinSide 1 = ADP + phosphate + cellular proteinSide 2.</text>
        <dbReference type="EC" id="7.4.2.8"/>
    </reaction>
</comment>
<comment type="subunit">
    <text evidence="1">Monomer and homodimer. Part of the essential Sec protein translocation apparatus which comprises SecA, SecYEG and auxiliary proteins SecDF. Other proteins may also be involved.</text>
</comment>
<comment type="subcellular location">
    <subcellularLocation>
        <location evidence="1">Cell membrane</location>
        <topology evidence="1">Peripheral membrane protein</topology>
        <orientation evidence="1">Cytoplasmic side</orientation>
    </subcellularLocation>
    <subcellularLocation>
        <location evidence="1">Cytoplasm</location>
    </subcellularLocation>
    <text evidence="1">Distribution is 50-50.</text>
</comment>
<comment type="similarity">
    <text evidence="1">Belongs to the SecA family.</text>
</comment>
<reference key="1">
    <citation type="journal article" date="2004" name="Science">
        <title>The complete genome sequence of Propionibacterium acnes, a commensal of human skin.</title>
        <authorList>
            <person name="Brueggemann H."/>
            <person name="Henne A."/>
            <person name="Hoster F."/>
            <person name="Liesegang H."/>
            <person name="Wiezer A."/>
            <person name="Strittmatter A."/>
            <person name="Hujer S."/>
            <person name="Duerre P."/>
            <person name="Gottschalk G."/>
        </authorList>
    </citation>
    <scope>NUCLEOTIDE SEQUENCE [LARGE SCALE GENOMIC DNA]</scope>
    <source>
        <strain>DSM 16379 / KPA171202</strain>
    </source>
</reference>
<gene>
    <name evidence="1" type="primary">secA</name>
    <name type="ordered locus">PPA1333</name>
</gene>
<sequence length="901" mass="101865">MNLMDRVLHAGEGKIIRRLNRIVGQVNSIEEDYVAMDDDELAGQTADFRQRLDNGESLDRLLPEAFATVREASKRVLGKRHFDVQIMGGAALHQCNIAEMKTGEGKTLVGLLPAYLEGLLGEGVHIVTVNDYLARVQSEQMGRVHRFLGLSISAILSDMPPMARKEAYKADVTYGTNNEFGFDYLRDNMASSLSECVQRGHHYAIVDEVDSILVDEARTPLIISGPAEENKQWYPEFAKIVSRLERDVDYEVDEKKRTVSVLGHGITVVEERLGIENLYESANTPLIGYLNNAIKAKELFHRDKDYVVVGGEVLIVDEHTGRTLAGRRYNEGLHQALEAKEHVEIKDEYQTLATITLQNYFRMYDKLAGMTGTAKTEESEFQKIYGLGVIPIPTNRPMIRKDQKDLIYRTEDAKFDAIIADVVERHEAGQPILIGTASVAKSELLSEKLKRAGVPHKVLNAKHHESEAAIVALAGRKGAVTVSTNMAGRGTDIILGGNPEFLTELDLREKGLDPLEDQDAYQTAWNNTLAKYEEQSQAEHNEVEGLGGLYVIGSERHESRRIDNQLRGRSGRQGDPGESRFYLSLQDELMRLFKPEVIDRAMVTLKMPEDMPIESKWVSRQIESAQKQVEAQNFEMRKNVLKYDDVMNRQRHVIYGDRRKVLEGADVETELRATTDRVVEAGVRKYAEGYSEDWDLEAMWNEIGTVYPVGLDLDEYADCQDVEELIEDFKADAQEAYDRRESELGEATMRQLEREVLLTVLDRKWREHLYEMDYLREGIGLRAMAQRDPLVEYQREGGDMFNSMMDSFKEEVVGFLFNLEIETGPQVGLVTDDGGNPVTADSVLPKVNRPRRALTYSAPDEQGEAETTSEDGQKPRGEGNRAARRSAASKKPKNRRNKKRR</sequence>